<reference key="1">
    <citation type="journal article" date="2000" name="Nature">
        <title>Sequence and analysis of chromosome 1 of the plant Arabidopsis thaliana.</title>
        <authorList>
            <person name="Theologis A."/>
            <person name="Ecker J.R."/>
            <person name="Palm C.J."/>
            <person name="Federspiel N.A."/>
            <person name="Kaul S."/>
            <person name="White O."/>
            <person name="Alonso J."/>
            <person name="Altafi H."/>
            <person name="Araujo R."/>
            <person name="Bowman C.L."/>
            <person name="Brooks S.Y."/>
            <person name="Buehler E."/>
            <person name="Chan A."/>
            <person name="Chao Q."/>
            <person name="Chen H."/>
            <person name="Cheuk R.F."/>
            <person name="Chin C.W."/>
            <person name="Chung M.K."/>
            <person name="Conn L."/>
            <person name="Conway A.B."/>
            <person name="Conway A.R."/>
            <person name="Creasy T.H."/>
            <person name="Dewar K."/>
            <person name="Dunn P."/>
            <person name="Etgu P."/>
            <person name="Feldblyum T.V."/>
            <person name="Feng J.-D."/>
            <person name="Fong B."/>
            <person name="Fujii C.Y."/>
            <person name="Gill J.E."/>
            <person name="Goldsmith A.D."/>
            <person name="Haas B."/>
            <person name="Hansen N.F."/>
            <person name="Hughes B."/>
            <person name="Huizar L."/>
            <person name="Hunter J.L."/>
            <person name="Jenkins J."/>
            <person name="Johnson-Hopson C."/>
            <person name="Khan S."/>
            <person name="Khaykin E."/>
            <person name="Kim C.J."/>
            <person name="Koo H.L."/>
            <person name="Kremenetskaia I."/>
            <person name="Kurtz D.B."/>
            <person name="Kwan A."/>
            <person name="Lam B."/>
            <person name="Langin-Hooper S."/>
            <person name="Lee A."/>
            <person name="Lee J.M."/>
            <person name="Lenz C.A."/>
            <person name="Li J.H."/>
            <person name="Li Y.-P."/>
            <person name="Lin X."/>
            <person name="Liu S.X."/>
            <person name="Liu Z.A."/>
            <person name="Luros J.S."/>
            <person name="Maiti R."/>
            <person name="Marziali A."/>
            <person name="Militscher J."/>
            <person name="Miranda M."/>
            <person name="Nguyen M."/>
            <person name="Nierman W.C."/>
            <person name="Osborne B.I."/>
            <person name="Pai G."/>
            <person name="Peterson J."/>
            <person name="Pham P.K."/>
            <person name="Rizzo M."/>
            <person name="Rooney T."/>
            <person name="Rowley D."/>
            <person name="Sakano H."/>
            <person name="Salzberg S.L."/>
            <person name="Schwartz J.R."/>
            <person name="Shinn P."/>
            <person name="Southwick A.M."/>
            <person name="Sun H."/>
            <person name="Tallon L.J."/>
            <person name="Tambunga G."/>
            <person name="Toriumi M.J."/>
            <person name="Town C.D."/>
            <person name="Utterback T."/>
            <person name="Van Aken S."/>
            <person name="Vaysberg M."/>
            <person name="Vysotskaia V.S."/>
            <person name="Walker M."/>
            <person name="Wu D."/>
            <person name="Yu G."/>
            <person name="Fraser C.M."/>
            <person name="Venter J.C."/>
            <person name="Davis R.W."/>
        </authorList>
    </citation>
    <scope>NUCLEOTIDE SEQUENCE [LARGE SCALE GENOMIC DNA]</scope>
    <source>
        <strain>cv. Columbia</strain>
    </source>
</reference>
<reference key="2">
    <citation type="journal article" date="2017" name="Plant J.">
        <title>Araport11: a complete reannotation of the Arabidopsis thaliana reference genome.</title>
        <authorList>
            <person name="Cheng C.Y."/>
            <person name="Krishnakumar V."/>
            <person name="Chan A.P."/>
            <person name="Thibaud-Nissen F."/>
            <person name="Schobel S."/>
            <person name="Town C.D."/>
        </authorList>
    </citation>
    <scope>GENOME REANNOTATION</scope>
    <source>
        <strain>cv. Columbia</strain>
    </source>
</reference>
<reference key="3">
    <citation type="journal article" date="2003" name="Science">
        <title>Empirical analysis of transcriptional activity in the Arabidopsis genome.</title>
        <authorList>
            <person name="Yamada K."/>
            <person name="Lim J."/>
            <person name="Dale J.M."/>
            <person name="Chen H."/>
            <person name="Shinn P."/>
            <person name="Palm C.J."/>
            <person name="Southwick A.M."/>
            <person name="Wu H.C."/>
            <person name="Kim C.J."/>
            <person name="Nguyen M."/>
            <person name="Pham P.K."/>
            <person name="Cheuk R.F."/>
            <person name="Karlin-Newmann G."/>
            <person name="Liu S.X."/>
            <person name="Lam B."/>
            <person name="Sakano H."/>
            <person name="Wu T."/>
            <person name="Yu G."/>
            <person name="Miranda M."/>
            <person name="Quach H.L."/>
            <person name="Tripp M."/>
            <person name="Chang C.H."/>
            <person name="Lee J.M."/>
            <person name="Toriumi M.J."/>
            <person name="Chan M.M."/>
            <person name="Tang C.C."/>
            <person name="Onodera C.S."/>
            <person name="Deng J.M."/>
            <person name="Akiyama K."/>
            <person name="Ansari Y."/>
            <person name="Arakawa T."/>
            <person name="Banh J."/>
            <person name="Banno F."/>
            <person name="Bowser L."/>
            <person name="Brooks S.Y."/>
            <person name="Carninci P."/>
            <person name="Chao Q."/>
            <person name="Choy N."/>
            <person name="Enju A."/>
            <person name="Goldsmith A.D."/>
            <person name="Gurjal M."/>
            <person name="Hansen N.F."/>
            <person name="Hayashizaki Y."/>
            <person name="Johnson-Hopson C."/>
            <person name="Hsuan V.W."/>
            <person name="Iida K."/>
            <person name="Karnes M."/>
            <person name="Khan S."/>
            <person name="Koesema E."/>
            <person name="Ishida J."/>
            <person name="Jiang P.X."/>
            <person name="Jones T."/>
            <person name="Kawai J."/>
            <person name="Kamiya A."/>
            <person name="Meyers C."/>
            <person name="Nakajima M."/>
            <person name="Narusaka M."/>
            <person name="Seki M."/>
            <person name="Sakurai T."/>
            <person name="Satou M."/>
            <person name="Tamse R."/>
            <person name="Vaysberg M."/>
            <person name="Wallender E.K."/>
            <person name="Wong C."/>
            <person name="Yamamura Y."/>
            <person name="Yuan S."/>
            <person name="Shinozaki K."/>
            <person name="Davis R.W."/>
            <person name="Theologis A."/>
            <person name="Ecker J.R."/>
        </authorList>
    </citation>
    <scope>NUCLEOTIDE SEQUENCE [LARGE SCALE MRNA]</scope>
    <source>
        <strain>cv. Columbia</strain>
    </source>
</reference>
<reference key="4">
    <citation type="submission" date="2002-03" db="EMBL/GenBank/DDBJ databases">
        <title>Full-length cDNA from Arabidopsis thaliana.</title>
        <authorList>
            <person name="Brover V.V."/>
            <person name="Troukhan M.E."/>
            <person name="Alexandrov N.A."/>
            <person name="Lu Y.-P."/>
            <person name="Flavell R.B."/>
            <person name="Feldmann K.A."/>
        </authorList>
    </citation>
    <scope>NUCLEOTIDE SEQUENCE [LARGE SCALE MRNA]</scope>
</reference>
<reference key="5">
    <citation type="journal article" date="2007" name="Nature">
        <title>Control of DNA methylation and heterochromatic silencing by histone H2B deubiquitination.</title>
        <authorList>
            <person name="Sridhar V.V."/>
            <person name="Kapoor A."/>
            <person name="Zhang K."/>
            <person name="Zhu J."/>
            <person name="Zhou T."/>
            <person name="Hasegawa P.M."/>
            <person name="Bressan R.A."/>
            <person name="Zhu J.-K."/>
        </authorList>
    </citation>
    <scope>UBIQUITINATION AT LYS-144</scope>
    <scope>IDENTIFICATION BY MASS SPECTROMETRY</scope>
</reference>
<reference key="6">
    <citation type="journal article" date="2007" name="J. Proteome Res.">
        <title>Characterization of post-translational modifications of histone H2B-variants isolated from Arabidopsis thaliana.</title>
        <authorList>
            <person name="Bergmueller E."/>
            <person name="Gehrig P.M."/>
            <person name="Gruissem W."/>
        </authorList>
    </citation>
    <scope>ACETYLATION AT LYS-7; LYS-39 AND LYS-40</scope>
    <scope>METHYLATION AT ALA-2</scope>
    <scope>IDENTIFICATION BY MASS SPECTROMETRY</scope>
</reference>
<reference key="7">
    <citation type="journal article" date="2013" name="Proc. Natl. Acad. Sci. U.S.A.">
        <title>Arabidopsis thaliana AHL family modulates hypocotyl growth redundantly by interacting with each other via the PPC/DUF296 domain.</title>
        <authorList>
            <person name="Zhao J."/>
            <person name="Favero D.S."/>
            <person name="Peng H."/>
            <person name="Neff M.M."/>
        </authorList>
    </citation>
    <scope>INTERACTION WITH AHL27</scope>
</reference>
<keyword id="KW-0002">3D-structure</keyword>
<keyword id="KW-0007">Acetylation</keyword>
<keyword id="KW-0158">Chromosome</keyword>
<keyword id="KW-0238">DNA-binding</keyword>
<keyword id="KW-1017">Isopeptide bond</keyword>
<keyword id="KW-0488">Methylation</keyword>
<keyword id="KW-0544">Nucleosome core</keyword>
<keyword id="KW-0539">Nucleus</keyword>
<keyword id="KW-1185">Reference proteome</keyword>
<keyword id="KW-0832">Ubl conjugation</keyword>
<name>H2B1_ARATH</name>
<protein>
    <recommendedName>
        <fullName>Histone H2B.1</fullName>
        <shortName>HTB1</shortName>
    </recommendedName>
</protein>
<gene>
    <name type="ordered locus">At1g07790</name>
    <name type="ORF">F24B9.10</name>
</gene>
<sequence length="148" mass="16402">MAPRAEKKPAEKKTAAERPVEENKAAEKAPAEKKPKAGKKLPPKEAGDKKKKRSKKNVETYKIYIFKVLKQVHPDIGISSKAMGIMNSFINDIFEKLAQESSKLARYNKKPTITSREIQTAVRLVLPGELAKHAVSEGTKAVTKFTSS</sequence>
<comment type="function">
    <text>Core component of nucleosome. Nucleosomes wrap and compact DNA into chromatin, limiting DNA accessibility to the cellular machineries which require DNA as a template. Histones thereby play a central role in transcription regulation, DNA repair, DNA replication and chromosomal stability. DNA accessibility is regulated via a complex set of post-translational modifications of histones, also called histone code, and nucleosome remodeling.</text>
</comment>
<comment type="subunit">
    <text evidence="7">The nucleosome is a histone octamer containing two molecules each of H2A, H2B, H3 and H4 assembled in one H3-H4 heterotetramer and two H2A-H2B heterodimers. The octamer wraps approximately 147 bp of DNA. Interacts with AHL27.</text>
</comment>
<comment type="subcellular location">
    <subcellularLocation>
        <location evidence="1">Nucleus</location>
    </subcellularLocation>
    <subcellularLocation>
        <location evidence="1">Chromosome</location>
    </subcellularLocation>
</comment>
<comment type="PTM">
    <text evidence="6">Can be acetylated to form H2BK6ac, H2BK33ac and H2BK34ac.</text>
</comment>
<comment type="PTM">
    <text evidence="6">Mono-, di- or trimethylated at the N-terminus to form H2BA1me1/2/3. H2BA1me2 may be acetylated to form H2BA1me2K6ac.</text>
</comment>
<comment type="PTM">
    <text>Monoubiquitinated by BRE1 to form H2BK143ub1 and deubiquitinated by UBP26. Required for heterochromatic histone H3 di- and trimethylation at H3K4me. May give a specific tag for epigenetic transcriptional activation.</text>
</comment>
<comment type="similarity">
    <text evidence="8">Belongs to the histone H2B family.</text>
</comment>
<comment type="caution">
    <text evidence="8">To ensure consistency between histone entries, we follow the 'Brno' nomenclature for histone modifications, with positions referring to those used in the literature for the 'closest' model organism. Due to slight variations in histone sequences between organisms and to the presence of initiator methionine in UniProtKB/Swiss-Prot sequences, the actual positions of modified amino acids in the sequence generally differ. In this entry the following conventions are used: H2BA1me1/2/3 = mono-, di- and trimethylated Ala-2; H2BK6ac = acetylated Lys-7; H2BK33ac = acetylated Lys-39; H2BK34ac = acetylated Lys-40; H2BK143ub1 = monoubiquitinated Lys-144.</text>
</comment>
<dbReference type="EMBL" id="AC007583">
    <property type="protein sequence ID" value="AAF75074.1"/>
    <property type="molecule type" value="Genomic_DNA"/>
</dbReference>
<dbReference type="EMBL" id="CP002684">
    <property type="protein sequence ID" value="AEE28184.1"/>
    <property type="molecule type" value="Genomic_DNA"/>
</dbReference>
<dbReference type="EMBL" id="AY070760">
    <property type="protein sequence ID" value="AAL50098.1"/>
    <property type="molecule type" value="mRNA"/>
</dbReference>
<dbReference type="EMBL" id="AF332446">
    <property type="protein sequence ID" value="AAG48809.1"/>
    <property type="molecule type" value="mRNA"/>
</dbReference>
<dbReference type="EMBL" id="AY133638">
    <property type="protein sequence ID" value="AAM91468.1"/>
    <property type="molecule type" value="mRNA"/>
</dbReference>
<dbReference type="EMBL" id="AY088636">
    <property type="protein sequence ID" value="AAM66958.1"/>
    <property type="molecule type" value="mRNA"/>
</dbReference>
<dbReference type="PIR" id="D86213">
    <property type="entry name" value="D86213"/>
</dbReference>
<dbReference type="RefSeq" id="NP_172258.1">
    <property type="nucleotide sequence ID" value="NM_100653.3"/>
</dbReference>
<dbReference type="PDB" id="6M2M">
    <property type="method" value="X-ray"/>
    <property type="resolution" value="2.85 A"/>
    <property type="chains" value="B/D/F/H/J/L=51-148"/>
</dbReference>
<dbReference type="PDB" id="7BP2">
    <property type="method" value="X-ray"/>
    <property type="resolution" value="1.58 A"/>
    <property type="chains" value="B/D=51-148"/>
</dbReference>
<dbReference type="PDB" id="7BP4">
    <property type="method" value="X-ray"/>
    <property type="resolution" value="2.10 A"/>
    <property type="chains" value="B/H=51-148"/>
</dbReference>
<dbReference type="PDB" id="7BP5">
    <property type="method" value="X-ray"/>
    <property type="resolution" value="1.90 A"/>
    <property type="chains" value="B=51-148"/>
</dbReference>
<dbReference type="PDB" id="7BP6">
    <property type="method" value="X-ray"/>
    <property type="resolution" value="1.58 A"/>
    <property type="chains" value="D=51-148"/>
</dbReference>
<dbReference type="PDB" id="7C7X">
    <property type="method" value="X-ray"/>
    <property type="resolution" value="3.00 A"/>
    <property type="chains" value="B/D=51-148"/>
</dbReference>
<dbReference type="PDBsum" id="6M2M"/>
<dbReference type="PDBsum" id="7BP2"/>
<dbReference type="PDBsum" id="7BP4"/>
<dbReference type="PDBsum" id="7BP5"/>
<dbReference type="PDBsum" id="7BP6"/>
<dbReference type="PDBsum" id="7C7X"/>
<dbReference type="SMR" id="Q9LQQ4"/>
<dbReference type="BioGRID" id="22534">
    <property type="interactions" value="1"/>
</dbReference>
<dbReference type="FunCoup" id="Q9LQQ4">
    <property type="interactions" value="1925"/>
</dbReference>
<dbReference type="STRING" id="3702.Q9LQQ4"/>
<dbReference type="iPTMnet" id="Q9LQQ4"/>
<dbReference type="MetOSite" id="Q9LQQ4"/>
<dbReference type="PaxDb" id="3702-AT1G07790.1"/>
<dbReference type="ProteomicsDB" id="230121"/>
<dbReference type="EnsemblPlants" id="AT1G07790.1">
    <property type="protein sequence ID" value="AT1G07790.1"/>
    <property type="gene ID" value="AT1G07790"/>
</dbReference>
<dbReference type="GeneID" id="837293"/>
<dbReference type="Gramene" id="AT1G07790.1">
    <property type="protein sequence ID" value="AT1G07790.1"/>
    <property type="gene ID" value="AT1G07790"/>
</dbReference>
<dbReference type="KEGG" id="ath:AT1G07790"/>
<dbReference type="Araport" id="AT1G07790"/>
<dbReference type="TAIR" id="AT1G07790">
    <property type="gene designation" value="HTB1"/>
</dbReference>
<dbReference type="eggNOG" id="KOG1744">
    <property type="taxonomic scope" value="Eukaryota"/>
</dbReference>
<dbReference type="HOGENOM" id="CLU_075666_1_0_1"/>
<dbReference type="InParanoid" id="Q9LQQ4"/>
<dbReference type="OMA" id="HDISNRI"/>
<dbReference type="PhylomeDB" id="Q9LQQ4"/>
<dbReference type="PRO" id="PR:Q9LQQ4"/>
<dbReference type="Proteomes" id="UP000006548">
    <property type="component" value="Chromosome 1"/>
</dbReference>
<dbReference type="ExpressionAtlas" id="Q9LQQ4">
    <property type="expression patterns" value="baseline and differential"/>
</dbReference>
<dbReference type="GO" id="GO:0009507">
    <property type="term" value="C:chloroplast"/>
    <property type="evidence" value="ECO:0007005"/>
    <property type="project" value="TAIR"/>
</dbReference>
<dbReference type="GO" id="GO:0005576">
    <property type="term" value="C:extracellular region"/>
    <property type="evidence" value="ECO:0007005"/>
    <property type="project" value="TAIR"/>
</dbReference>
<dbReference type="GO" id="GO:0000786">
    <property type="term" value="C:nucleosome"/>
    <property type="evidence" value="ECO:0007669"/>
    <property type="project" value="UniProtKB-KW"/>
</dbReference>
<dbReference type="GO" id="GO:0005634">
    <property type="term" value="C:nucleus"/>
    <property type="evidence" value="ECO:0007669"/>
    <property type="project" value="UniProtKB-SubCell"/>
</dbReference>
<dbReference type="GO" id="GO:0003677">
    <property type="term" value="F:DNA binding"/>
    <property type="evidence" value="ECO:0007669"/>
    <property type="project" value="UniProtKB-KW"/>
</dbReference>
<dbReference type="GO" id="GO:0046982">
    <property type="term" value="F:protein heterodimerization activity"/>
    <property type="evidence" value="ECO:0007669"/>
    <property type="project" value="InterPro"/>
</dbReference>
<dbReference type="GO" id="GO:0030527">
    <property type="term" value="F:structural constituent of chromatin"/>
    <property type="evidence" value="ECO:0007669"/>
    <property type="project" value="InterPro"/>
</dbReference>
<dbReference type="CDD" id="cd22910">
    <property type="entry name" value="HFD_H2B"/>
    <property type="match status" value="1"/>
</dbReference>
<dbReference type="FunFam" id="1.10.20.10:FF:000014">
    <property type="entry name" value="Histone H2B"/>
    <property type="match status" value="1"/>
</dbReference>
<dbReference type="Gene3D" id="1.10.20.10">
    <property type="entry name" value="Histone, subunit A"/>
    <property type="match status" value="1"/>
</dbReference>
<dbReference type="InterPro" id="IPR009072">
    <property type="entry name" value="Histone-fold"/>
</dbReference>
<dbReference type="InterPro" id="IPR007125">
    <property type="entry name" value="Histone_H2A/H2B/H3"/>
</dbReference>
<dbReference type="InterPro" id="IPR000558">
    <property type="entry name" value="Histone_H2B"/>
</dbReference>
<dbReference type="InterPro" id="IPR055333">
    <property type="entry name" value="HISTONE_H2B_site"/>
</dbReference>
<dbReference type="PANTHER" id="PTHR23428">
    <property type="entry name" value="HISTONE H2B"/>
    <property type="match status" value="1"/>
</dbReference>
<dbReference type="Pfam" id="PF00125">
    <property type="entry name" value="Histone"/>
    <property type="match status" value="1"/>
</dbReference>
<dbReference type="PRINTS" id="PR00621">
    <property type="entry name" value="HISTONEH2B"/>
</dbReference>
<dbReference type="SMART" id="SM00427">
    <property type="entry name" value="H2B"/>
    <property type="match status" value="1"/>
</dbReference>
<dbReference type="SUPFAM" id="SSF47113">
    <property type="entry name" value="Histone-fold"/>
    <property type="match status" value="1"/>
</dbReference>
<dbReference type="PROSITE" id="PS00357">
    <property type="entry name" value="HISTONE_H2B"/>
    <property type="match status" value="1"/>
</dbReference>
<evidence type="ECO:0000250" key="1"/>
<evidence type="ECO:0000250" key="2">
    <source>
        <dbReference type="UniProtKB" id="O23629"/>
    </source>
</evidence>
<evidence type="ECO:0000250" key="3">
    <source>
        <dbReference type="UniProtKB" id="Q9FFC0"/>
    </source>
</evidence>
<evidence type="ECO:0000256" key="4">
    <source>
        <dbReference type="SAM" id="MobiDB-lite"/>
    </source>
</evidence>
<evidence type="ECO:0000269" key="5">
    <source>
    </source>
</evidence>
<evidence type="ECO:0000269" key="6">
    <source>
    </source>
</evidence>
<evidence type="ECO:0000269" key="7">
    <source>
    </source>
</evidence>
<evidence type="ECO:0000305" key="8"/>
<evidence type="ECO:0007829" key="9">
    <source>
        <dbReference type="PDB" id="7BP2"/>
    </source>
</evidence>
<evidence type="ECO:0007829" key="10">
    <source>
        <dbReference type="PDB" id="7BP5"/>
    </source>
</evidence>
<evidence type="ECO:0007829" key="11">
    <source>
        <dbReference type="PDB" id="7BP6"/>
    </source>
</evidence>
<feature type="initiator methionine" description="Removed" evidence="8">
    <location>
        <position position="1"/>
    </location>
</feature>
<feature type="chain" id="PRO_0000238688" description="Histone H2B.1">
    <location>
        <begin position="2"/>
        <end position="148"/>
    </location>
</feature>
<feature type="region of interest" description="Disordered" evidence="4">
    <location>
        <begin position="1"/>
        <end position="56"/>
    </location>
</feature>
<feature type="compositionally biased region" description="Basic and acidic residues" evidence="4">
    <location>
        <begin position="1"/>
        <end position="35"/>
    </location>
</feature>
<feature type="modified residue" description="N,N,N-trimethylalanine; alternate" evidence="6">
    <location>
        <position position="2"/>
    </location>
</feature>
<feature type="modified residue" description="N,N-dimethylalanine; alternate" evidence="6">
    <location>
        <position position="2"/>
    </location>
</feature>
<feature type="modified residue" description="N-methylalanine; alternate" evidence="6">
    <location>
        <position position="2"/>
    </location>
</feature>
<feature type="modified residue" description="N6-acetyllysine; partial" evidence="6">
    <location>
        <position position="7"/>
    </location>
</feature>
<feature type="modified residue" description="N6-acetyllysine" evidence="2">
    <location>
        <position position="12"/>
    </location>
</feature>
<feature type="modified residue" description="N6,N6-dimethyllysine" evidence="3">
    <location>
        <position position="13"/>
    </location>
</feature>
<feature type="modified residue" description="N6-acetyllysine" evidence="2">
    <location>
        <position position="28"/>
    </location>
</feature>
<feature type="modified residue" description="N6-acetyllysine" evidence="2">
    <location>
        <position position="33"/>
    </location>
</feature>
<feature type="modified residue" description="N6-acetyllysine" evidence="6">
    <location>
        <position position="39"/>
    </location>
</feature>
<feature type="modified residue" description="N6-acetyllysine; partial" evidence="6">
    <location>
        <position position="40"/>
    </location>
</feature>
<feature type="cross-link" description="Glycyl lysine isopeptide (Lys-Gly) (interchain with G-Cter in ubiquitin)" evidence="5">
    <location>
        <position position="144"/>
    </location>
</feature>
<feature type="sequence conflict" description="In Ref. 4; AAM66958." evidence="8" ref="4">
    <original>R</original>
    <variation>K</variation>
    <location>
        <position position="18"/>
    </location>
</feature>
<feature type="helix" evidence="9">
    <location>
        <begin position="62"/>
        <end position="72"/>
    </location>
</feature>
<feature type="strand" evidence="11">
    <location>
        <begin position="77"/>
        <end position="79"/>
    </location>
</feature>
<feature type="helix" evidence="9">
    <location>
        <begin position="80"/>
        <end position="107"/>
    </location>
</feature>
<feature type="strand" evidence="10">
    <location>
        <begin position="108"/>
        <end position="110"/>
    </location>
</feature>
<feature type="strand" evidence="9">
    <location>
        <begin position="111"/>
        <end position="113"/>
    </location>
</feature>
<feature type="helix" evidence="9">
    <location>
        <begin position="115"/>
        <end position="125"/>
    </location>
</feature>
<feature type="helix" evidence="9">
    <location>
        <begin position="128"/>
        <end position="146"/>
    </location>
</feature>
<accession>Q9LQQ4</accession>
<accession>Q8L950</accession>
<proteinExistence type="evidence at protein level"/>
<organism>
    <name type="scientific">Arabidopsis thaliana</name>
    <name type="common">Mouse-ear cress</name>
    <dbReference type="NCBI Taxonomy" id="3702"/>
    <lineage>
        <taxon>Eukaryota</taxon>
        <taxon>Viridiplantae</taxon>
        <taxon>Streptophyta</taxon>
        <taxon>Embryophyta</taxon>
        <taxon>Tracheophyta</taxon>
        <taxon>Spermatophyta</taxon>
        <taxon>Magnoliopsida</taxon>
        <taxon>eudicotyledons</taxon>
        <taxon>Gunneridae</taxon>
        <taxon>Pentapetalae</taxon>
        <taxon>rosids</taxon>
        <taxon>malvids</taxon>
        <taxon>Brassicales</taxon>
        <taxon>Brassicaceae</taxon>
        <taxon>Camelineae</taxon>
        <taxon>Arabidopsis</taxon>
    </lineage>
</organism>